<feature type="chain" id="PRO_0000072669" description="CAVP-target protein">
    <location>
        <begin position="1"/>
        <end position="243"/>
    </location>
</feature>
<feature type="domain" description="IQ" evidence="1">
    <location>
        <begin position="35"/>
        <end position="62"/>
    </location>
</feature>
<feature type="domain" description="Ig-like C2-type 1">
    <location>
        <begin position="59"/>
        <end position="150"/>
    </location>
</feature>
<feature type="domain" description="Ig-like C2-type 2">
    <location>
        <begin position="151"/>
        <end position="243"/>
    </location>
</feature>
<feature type="region of interest" description="Disordered" evidence="2">
    <location>
        <begin position="1"/>
        <end position="22"/>
    </location>
</feature>
<feature type="compositionally biased region" description="Low complexity" evidence="2">
    <location>
        <begin position="7"/>
        <end position="20"/>
    </location>
</feature>
<feature type="sequence variant">
    <original>D</original>
    <variation>E</variation>
    <location>
        <position position="113"/>
    </location>
</feature>
<keyword id="KW-0903">Direct protein sequencing</keyword>
<keyword id="KW-0393">Immunoglobulin domain</keyword>
<keyword id="KW-0677">Repeat</keyword>
<reference key="1">
    <citation type="journal article" date="1990" name="J. Biol. Chem.">
        <title>Primary structure of the target of calcium vector protein of amphioxus.</title>
        <authorList>
            <person name="Takagi T."/>
            <person name="Cox J.A."/>
        </authorList>
    </citation>
    <scope>PROTEIN SEQUENCE</scope>
    <source>
        <tissue>Muscle</tissue>
    </source>
</reference>
<protein>
    <recommendedName>
        <fullName>CAVP-target protein</fullName>
        <shortName>CAVPT</shortName>
    </recommendedName>
</protein>
<accession>P05548</accession>
<comment type="function">
    <text>This protein is the target of CAVP, which binds to it in a calcium-dependent manner.</text>
</comment>
<dbReference type="PIR" id="A37982">
    <property type="entry name" value="A37982"/>
</dbReference>
<dbReference type="SMR" id="P05548"/>
<dbReference type="GO" id="GO:0004672">
    <property type="term" value="F:protein kinase activity"/>
    <property type="evidence" value="ECO:0007669"/>
    <property type="project" value="TreeGrafter"/>
</dbReference>
<dbReference type="FunFam" id="2.60.40.10:FF:000107">
    <property type="entry name" value="Myosin, light chain kinase a"/>
    <property type="match status" value="1"/>
</dbReference>
<dbReference type="FunFam" id="2.60.40.10:FF:000031">
    <property type="entry name" value="Myosin-binding protein C, slow type"/>
    <property type="match status" value="1"/>
</dbReference>
<dbReference type="Gene3D" id="2.60.40.10">
    <property type="entry name" value="Immunoglobulins"/>
    <property type="match status" value="2"/>
</dbReference>
<dbReference type="InterPro" id="IPR007110">
    <property type="entry name" value="Ig-like_dom"/>
</dbReference>
<dbReference type="InterPro" id="IPR036179">
    <property type="entry name" value="Ig-like_dom_sf"/>
</dbReference>
<dbReference type="InterPro" id="IPR013783">
    <property type="entry name" value="Ig-like_fold"/>
</dbReference>
<dbReference type="InterPro" id="IPR013098">
    <property type="entry name" value="Ig_I-set"/>
</dbReference>
<dbReference type="InterPro" id="IPR003599">
    <property type="entry name" value="Ig_sub"/>
</dbReference>
<dbReference type="InterPro" id="IPR003598">
    <property type="entry name" value="Ig_sub2"/>
</dbReference>
<dbReference type="PANTHER" id="PTHR47633">
    <property type="entry name" value="IMMUNOGLOBULIN"/>
    <property type="match status" value="1"/>
</dbReference>
<dbReference type="PANTHER" id="PTHR47633:SF7">
    <property type="entry name" value="TITIN HOMOLOG"/>
    <property type="match status" value="1"/>
</dbReference>
<dbReference type="Pfam" id="PF07679">
    <property type="entry name" value="I-set"/>
    <property type="match status" value="2"/>
</dbReference>
<dbReference type="SMART" id="SM00409">
    <property type="entry name" value="IG"/>
    <property type="match status" value="2"/>
</dbReference>
<dbReference type="SMART" id="SM00408">
    <property type="entry name" value="IGc2"/>
    <property type="match status" value="2"/>
</dbReference>
<dbReference type="SUPFAM" id="SSF48726">
    <property type="entry name" value="Immunoglobulin"/>
    <property type="match status" value="2"/>
</dbReference>
<dbReference type="PROSITE" id="PS50835">
    <property type="entry name" value="IG_LIKE"/>
    <property type="match status" value="1"/>
</dbReference>
<dbReference type="PROSITE" id="PS50096">
    <property type="entry name" value="IQ"/>
    <property type="match status" value="1"/>
</dbReference>
<organism>
    <name type="scientific">Branchiostoma lanceolatum</name>
    <name type="common">Common lancelet</name>
    <name type="synonym">Amphioxus lanceolatum</name>
    <dbReference type="NCBI Taxonomy" id="7740"/>
    <lineage>
        <taxon>Eukaryota</taxon>
        <taxon>Metazoa</taxon>
        <taxon>Chordata</taxon>
        <taxon>Cephalochordata</taxon>
        <taxon>Leptocardii</taxon>
        <taxon>Amphioxiformes</taxon>
        <taxon>Branchiostomatidae</taxon>
        <taxon>Branchiostoma</taxon>
    </lineage>
</organism>
<proteinExistence type="evidence at protein level"/>
<evidence type="ECO:0000255" key="1">
    <source>
        <dbReference type="PROSITE-ProRule" id="PRU00116"/>
    </source>
</evidence>
<evidence type="ECO:0000256" key="2">
    <source>
        <dbReference type="SAM" id="MobiDB-lite"/>
    </source>
</evidence>
<name>CAVPT_BRALA</name>
<sequence length="243" mass="26620">PKPPAEAKPAAKPAAPPAAANPFEGVDVKDPIVISAATRIQASFRMHKNRMALKEKSIPKFSQVLKDMFVMEGSAVTFFARVWGIPDPVIKWFKDGQEVKQGPKHEIKFDDKDGTFLIIRNADGDDVGTYTCQATNSFGEAFDSARLALEVPAKCTKQPDNITVKAGGNFEIKVEIAGEPEPDVIWTKGKKEIDEGGRFSYEDSPDYSILRVEKAQAGDAGKYEIEIVNDLGKARAYCTVKVN</sequence>